<gene>
    <name evidence="1" type="primary">hscA</name>
    <name type="ordered locus">EcSMS35_2678</name>
</gene>
<organism>
    <name type="scientific">Escherichia coli (strain SMS-3-5 / SECEC)</name>
    <dbReference type="NCBI Taxonomy" id="439855"/>
    <lineage>
        <taxon>Bacteria</taxon>
        <taxon>Pseudomonadati</taxon>
        <taxon>Pseudomonadota</taxon>
        <taxon>Gammaproteobacteria</taxon>
        <taxon>Enterobacterales</taxon>
        <taxon>Enterobacteriaceae</taxon>
        <taxon>Escherichia</taxon>
    </lineage>
</organism>
<accession>B1LNI1</accession>
<keyword id="KW-0067">ATP-binding</keyword>
<keyword id="KW-0143">Chaperone</keyword>
<keyword id="KW-0547">Nucleotide-binding</keyword>
<sequence>MALLQISEPGLSAAPHQRRLAAGIDLGTTNSLVATVRSGQAETLADHEGRHLLPSVVHYQQQGHSVGYDARTNAALDTANTISSVKRLMGRSLADIQQRYPHLPYQFQASENGLPMIETAAGLLNPVRVSADILKALAARATEALAGELDGVVITVPAYFDDAQRQGTKDAARLAGLHVLRLLNEPTAAAIAYGLDSGQEGVIAVYDLGGGTFDISILRLSRGVFEVLATGGDSALGGDDFDHLLADYIREQAGIPDRSDNRVQRELLDAAIAAKIALSDADSVTVNVAGWQGEISREQFNELIAPLVKRTLLACRRALKDAGVEADEVLEVVMVGGSTRVPLVRERVGEFFGRPPLTSIDPDKVVAIGAAIQADILVGNKPDSEMLLLDVIPLSLGLETMGGLVEKVIPRNTTIPVARAQDFTTFKDGQTAMSIHVMQGERELVQDCRSLARFALRGIPALPAGGAHIRVTFQVDADGLLSVTAMEKSTGVEASIQVKPSYGLTDSEIASMIKDSMSYAEQDVKARMLAEQKVEAARVLESLHGALAADAALLSAAERQDIDDAAAHLSEVAQGDDVDAIEQAIKNVDKQTQDFAARRMDQSVRRALKGHSVDEV</sequence>
<evidence type="ECO:0000255" key="1">
    <source>
        <dbReference type="HAMAP-Rule" id="MF_00679"/>
    </source>
</evidence>
<reference key="1">
    <citation type="journal article" date="2008" name="J. Bacteriol.">
        <title>Insights into the environmental resistance gene pool from the genome sequence of the multidrug-resistant environmental isolate Escherichia coli SMS-3-5.</title>
        <authorList>
            <person name="Fricke W.F."/>
            <person name="Wright M.S."/>
            <person name="Lindell A.H."/>
            <person name="Harkins D.M."/>
            <person name="Baker-Austin C."/>
            <person name="Ravel J."/>
            <person name="Stepanauskas R."/>
        </authorList>
    </citation>
    <scope>NUCLEOTIDE SEQUENCE [LARGE SCALE GENOMIC DNA]</scope>
    <source>
        <strain>SMS-3-5 / SECEC</strain>
    </source>
</reference>
<feature type="chain" id="PRO_1000131679" description="Chaperone protein HscA">
    <location>
        <begin position="1"/>
        <end position="616"/>
    </location>
</feature>
<comment type="function">
    <text evidence="1">Chaperone involved in the maturation of iron-sulfur cluster-containing proteins. Has a low intrinsic ATPase activity which is markedly stimulated by HscB. Involved in the maturation of IscU.</text>
</comment>
<comment type="similarity">
    <text evidence="1">Belongs to the heat shock protein 70 family.</text>
</comment>
<proteinExistence type="inferred from homology"/>
<dbReference type="EMBL" id="CP000970">
    <property type="protein sequence ID" value="ACB16857.1"/>
    <property type="molecule type" value="Genomic_DNA"/>
</dbReference>
<dbReference type="RefSeq" id="WP_001196609.1">
    <property type="nucleotide sequence ID" value="NC_010498.1"/>
</dbReference>
<dbReference type="SMR" id="B1LNI1"/>
<dbReference type="KEGG" id="ecm:EcSMS35_2678"/>
<dbReference type="HOGENOM" id="CLU_005965_2_1_6"/>
<dbReference type="Proteomes" id="UP000007011">
    <property type="component" value="Chromosome"/>
</dbReference>
<dbReference type="GO" id="GO:0005524">
    <property type="term" value="F:ATP binding"/>
    <property type="evidence" value="ECO:0007669"/>
    <property type="project" value="UniProtKB-KW"/>
</dbReference>
<dbReference type="GO" id="GO:0016887">
    <property type="term" value="F:ATP hydrolysis activity"/>
    <property type="evidence" value="ECO:0007669"/>
    <property type="project" value="UniProtKB-UniRule"/>
</dbReference>
<dbReference type="GO" id="GO:0140662">
    <property type="term" value="F:ATP-dependent protein folding chaperone"/>
    <property type="evidence" value="ECO:0007669"/>
    <property type="project" value="InterPro"/>
</dbReference>
<dbReference type="GO" id="GO:0051082">
    <property type="term" value="F:unfolded protein binding"/>
    <property type="evidence" value="ECO:0007669"/>
    <property type="project" value="InterPro"/>
</dbReference>
<dbReference type="GO" id="GO:0016226">
    <property type="term" value="P:iron-sulfur cluster assembly"/>
    <property type="evidence" value="ECO:0007669"/>
    <property type="project" value="InterPro"/>
</dbReference>
<dbReference type="CDD" id="cd10236">
    <property type="entry name" value="ASKHA_NBD_HSP70_HscA"/>
    <property type="match status" value="1"/>
</dbReference>
<dbReference type="FunFam" id="1.20.1270.10:FF:000006">
    <property type="entry name" value="Chaperone protein HscA"/>
    <property type="match status" value="1"/>
</dbReference>
<dbReference type="FunFam" id="3.30.420.40:FF:000046">
    <property type="entry name" value="Chaperone protein HscA"/>
    <property type="match status" value="1"/>
</dbReference>
<dbReference type="FunFam" id="3.90.640.10:FF:000013">
    <property type="entry name" value="Chaperone protein HscA"/>
    <property type="match status" value="1"/>
</dbReference>
<dbReference type="FunFam" id="2.60.34.10:FF:000005">
    <property type="entry name" value="Chaperone protein HscA homolog"/>
    <property type="match status" value="1"/>
</dbReference>
<dbReference type="FunFam" id="3.30.420.40:FF:000020">
    <property type="entry name" value="Chaperone protein HscA homolog"/>
    <property type="match status" value="1"/>
</dbReference>
<dbReference type="Gene3D" id="1.20.1270.10">
    <property type="match status" value="1"/>
</dbReference>
<dbReference type="Gene3D" id="3.30.420.40">
    <property type="match status" value="2"/>
</dbReference>
<dbReference type="Gene3D" id="3.90.640.10">
    <property type="entry name" value="Actin, Chain A, domain 4"/>
    <property type="match status" value="1"/>
</dbReference>
<dbReference type="Gene3D" id="2.60.34.10">
    <property type="entry name" value="Substrate Binding Domain Of DNAk, Chain A, domain 1"/>
    <property type="match status" value="1"/>
</dbReference>
<dbReference type="HAMAP" id="MF_00679">
    <property type="entry name" value="HscA"/>
    <property type="match status" value="1"/>
</dbReference>
<dbReference type="InterPro" id="IPR043129">
    <property type="entry name" value="ATPase_NBD"/>
</dbReference>
<dbReference type="InterPro" id="IPR018181">
    <property type="entry name" value="Heat_shock_70_CS"/>
</dbReference>
<dbReference type="InterPro" id="IPR042039">
    <property type="entry name" value="HscA_NBD"/>
</dbReference>
<dbReference type="InterPro" id="IPR029048">
    <property type="entry name" value="HSP70_C_sf"/>
</dbReference>
<dbReference type="InterPro" id="IPR029047">
    <property type="entry name" value="HSP70_peptide-bd_sf"/>
</dbReference>
<dbReference type="InterPro" id="IPR013126">
    <property type="entry name" value="Hsp_70_fam"/>
</dbReference>
<dbReference type="InterPro" id="IPR010236">
    <property type="entry name" value="ISC_FeS_clus_asmbl_HscA"/>
</dbReference>
<dbReference type="NCBIfam" id="TIGR01991">
    <property type="entry name" value="HscA"/>
    <property type="match status" value="1"/>
</dbReference>
<dbReference type="NCBIfam" id="NF003520">
    <property type="entry name" value="PRK05183.1"/>
    <property type="match status" value="1"/>
</dbReference>
<dbReference type="PANTHER" id="PTHR19375">
    <property type="entry name" value="HEAT SHOCK PROTEIN 70KDA"/>
    <property type="match status" value="1"/>
</dbReference>
<dbReference type="Pfam" id="PF00012">
    <property type="entry name" value="HSP70"/>
    <property type="match status" value="1"/>
</dbReference>
<dbReference type="PRINTS" id="PR00301">
    <property type="entry name" value="HEATSHOCK70"/>
</dbReference>
<dbReference type="SUPFAM" id="SSF53067">
    <property type="entry name" value="Actin-like ATPase domain"/>
    <property type="match status" value="2"/>
</dbReference>
<dbReference type="SUPFAM" id="SSF100934">
    <property type="entry name" value="Heat shock protein 70kD (HSP70), C-terminal subdomain"/>
    <property type="match status" value="1"/>
</dbReference>
<dbReference type="SUPFAM" id="SSF100920">
    <property type="entry name" value="Heat shock protein 70kD (HSP70), peptide-binding domain"/>
    <property type="match status" value="1"/>
</dbReference>
<dbReference type="PROSITE" id="PS00297">
    <property type="entry name" value="HSP70_1"/>
    <property type="match status" value="1"/>
</dbReference>
<dbReference type="PROSITE" id="PS00329">
    <property type="entry name" value="HSP70_2"/>
    <property type="match status" value="1"/>
</dbReference>
<dbReference type="PROSITE" id="PS01036">
    <property type="entry name" value="HSP70_3"/>
    <property type="match status" value="1"/>
</dbReference>
<protein>
    <recommendedName>
        <fullName evidence="1">Chaperone protein HscA</fullName>
    </recommendedName>
    <alternativeName>
        <fullName evidence="1">Hsc66</fullName>
    </alternativeName>
</protein>
<name>HSCA_ECOSM</name>